<keyword id="KW-0378">Hydrolase</keyword>
<keyword id="KW-0479">Metal-binding</keyword>
<keyword id="KW-0862">Zinc</keyword>
<reference key="1">
    <citation type="journal article" date="2009" name="PLoS Genet.">
        <title>Organised genome dynamics in the Escherichia coli species results in highly diverse adaptive paths.</title>
        <authorList>
            <person name="Touchon M."/>
            <person name="Hoede C."/>
            <person name="Tenaillon O."/>
            <person name="Barbe V."/>
            <person name="Baeriswyl S."/>
            <person name="Bidet P."/>
            <person name="Bingen E."/>
            <person name="Bonacorsi S."/>
            <person name="Bouchier C."/>
            <person name="Bouvet O."/>
            <person name="Calteau A."/>
            <person name="Chiapello H."/>
            <person name="Clermont O."/>
            <person name="Cruveiller S."/>
            <person name="Danchin A."/>
            <person name="Diard M."/>
            <person name="Dossat C."/>
            <person name="Karoui M.E."/>
            <person name="Frapy E."/>
            <person name="Garry L."/>
            <person name="Ghigo J.M."/>
            <person name="Gilles A.M."/>
            <person name="Johnson J."/>
            <person name="Le Bouguenec C."/>
            <person name="Lescat M."/>
            <person name="Mangenot S."/>
            <person name="Martinez-Jehanne V."/>
            <person name="Matic I."/>
            <person name="Nassif X."/>
            <person name="Oztas S."/>
            <person name="Petit M.A."/>
            <person name="Pichon C."/>
            <person name="Rouy Z."/>
            <person name="Ruf C.S."/>
            <person name="Schneider D."/>
            <person name="Tourret J."/>
            <person name="Vacherie B."/>
            <person name="Vallenet D."/>
            <person name="Medigue C."/>
            <person name="Rocha E.P.C."/>
            <person name="Denamur E."/>
        </authorList>
    </citation>
    <scope>NUCLEOTIDE SEQUENCE [LARGE SCALE GENOMIC DNA]</scope>
    <source>
        <strain>ED1a</strain>
    </source>
</reference>
<name>CDD_ECO81</name>
<protein>
    <recommendedName>
        <fullName evidence="1">Cytidine deaminase</fullName>
        <ecNumber evidence="1">3.5.4.5</ecNumber>
    </recommendedName>
    <alternativeName>
        <fullName evidence="1">Cytidine aminohydrolase</fullName>
        <shortName evidence="1">CDA</shortName>
    </alternativeName>
</protein>
<gene>
    <name evidence="1" type="primary">cdd</name>
    <name type="ordered locus">ECED1_2590</name>
</gene>
<dbReference type="EC" id="3.5.4.5" evidence="1"/>
<dbReference type="EMBL" id="CU928162">
    <property type="protein sequence ID" value="CAR08771.2"/>
    <property type="molecule type" value="Genomic_DNA"/>
</dbReference>
<dbReference type="RefSeq" id="WP_000553553.1">
    <property type="nucleotide sequence ID" value="NC_011745.1"/>
</dbReference>
<dbReference type="SMR" id="B7MXF5"/>
<dbReference type="KEGG" id="ecq:ECED1_2590"/>
<dbReference type="HOGENOM" id="CLU_052424_0_0_6"/>
<dbReference type="Proteomes" id="UP000000748">
    <property type="component" value="Chromosome"/>
</dbReference>
<dbReference type="GO" id="GO:0005829">
    <property type="term" value="C:cytosol"/>
    <property type="evidence" value="ECO:0007669"/>
    <property type="project" value="TreeGrafter"/>
</dbReference>
<dbReference type="GO" id="GO:0004126">
    <property type="term" value="F:cytidine deaminase activity"/>
    <property type="evidence" value="ECO:0007669"/>
    <property type="project" value="UniProtKB-UniRule"/>
</dbReference>
<dbReference type="GO" id="GO:0042802">
    <property type="term" value="F:identical protein binding"/>
    <property type="evidence" value="ECO:0007669"/>
    <property type="project" value="UniProtKB-ARBA"/>
</dbReference>
<dbReference type="GO" id="GO:0008270">
    <property type="term" value="F:zinc ion binding"/>
    <property type="evidence" value="ECO:0007669"/>
    <property type="project" value="UniProtKB-UniRule"/>
</dbReference>
<dbReference type="GO" id="GO:0009972">
    <property type="term" value="P:cytidine deamination"/>
    <property type="evidence" value="ECO:0007669"/>
    <property type="project" value="InterPro"/>
</dbReference>
<dbReference type="CDD" id="cd01283">
    <property type="entry name" value="cytidine_deaminase"/>
    <property type="match status" value="2"/>
</dbReference>
<dbReference type="FunFam" id="3.40.140.10:FF:000006">
    <property type="entry name" value="Cytidine deaminase"/>
    <property type="match status" value="1"/>
</dbReference>
<dbReference type="FunFam" id="3.40.140.10:FF:000007">
    <property type="entry name" value="Cytidine deaminase"/>
    <property type="match status" value="1"/>
</dbReference>
<dbReference type="Gene3D" id="3.40.140.10">
    <property type="entry name" value="Cytidine Deaminase, domain 2"/>
    <property type="match status" value="2"/>
</dbReference>
<dbReference type="HAMAP" id="MF_01558">
    <property type="entry name" value="Cyt_deam"/>
    <property type="match status" value="1"/>
</dbReference>
<dbReference type="InterPro" id="IPR016192">
    <property type="entry name" value="APOBEC/CMP_deaminase_Zn-bd"/>
</dbReference>
<dbReference type="InterPro" id="IPR002125">
    <property type="entry name" value="CMP_dCMP_dom"/>
</dbReference>
<dbReference type="InterPro" id="IPR013171">
    <property type="entry name" value="Cyd/dCyd_deaminase_Zn-bd"/>
</dbReference>
<dbReference type="InterPro" id="IPR050202">
    <property type="entry name" value="Cyt/Deoxycyt_deaminase"/>
</dbReference>
<dbReference type="InterPro" id="IPR006263">
    <property type="entry name" value="Cyt_deam_dimer"/>
</dbReference>
<dbReference type="InterPro" id="IPR016193">
    <property type="entry name" value="Cytidine_deaminase-like"/>
</dbReference>
<dbReference type="InterPro" id="IPR020797">
    <property type="entry name" value="Cytidine_deaminase_bacteria"/>
</dbReference>
<dbReference type="NCBIfam" id="TIGR01355">
    <property type="entry name" value="cyt_deam_dimer"/>
    <property type="match status" value="1"/>
</dbReference>
<dbReference type="NCBIfam" id="NF006537">
    <property type="entry name" value="PRK09027.1"/>
    <property type="match status" value="1"/>
</dbReference>
<dbReference type="PANTHER" id="PTHR11644">
    <property type="entry name" value="CYTIDINE DEAMINASE"/>
    <property type="match status" value="1"/>
</dbReference>
<dbReference type="PANTHER" id="PTHR11644:SF2">
    <property type="entry name" value="CYTIDINE DEAMINASE"/>
    <property type="match status" value="1"/>
</dbReference>
<dbReference type="Pfam" id="PF00383">
    <property type="entry name" value="dCMP_cyt_deam_1"/>
    <property type="match status" value="1"/>
</dbReference>
<dbReference type="Pfam" id="PF08211">
    <property type="entry name" value="dCMP_cyt_deam_2"/>
    <property type="match status" value="1"/>
</dbReference>
<dbReference type="PIRSF" id="PIRSF006334">
    <property type="entry name" value="Cdd_plus_pseudo"/>
    <property type="match status" value="1"/>
</dbReference>
<dbReference type="SUPFAM" id="SSF53927">
    <property type="entry name" value="Cytidine deaminase-like"/>
    <property type="match status" value="2"/>
</dbReference>
<dbReference type="PROSITE" id="PS00903">
    <property type="entry name" value="CYT_DCMP_DEAMINASES_1"/>
    <property type="match status" value="1"/>
</dbReference>
<dbReference type="PROSITE" id="PS51747">
    <property type="entry name" value="CYT_DCMP_DEAMINASES_2"/>
    <property type="match status" value="2"/>
</dbReference>
<sequence length="294" mass="31567">MHPRFQTAFAQLADNLQSALEPILADKYFPALLTGEQVSSLKSATGLDEDALAFALLPLAAACARTPLSNFNVGAIARGVSGTWYFGANMEFIGATMQQTVHAEQSAISHAWLSGEKALAAITVNYTPCGHCRQFMNELNSGLDLRIHLPGREAHALRDYLPDAFGPKDLEIKTLLMDEQDHGYALTGDALSQAAIAAANRSHMPYSKSPSGVALECKDGRIFSGSYAENAAFNPTLPPLQGALILLNLKGYDYPDIQRAVLAEKADAPLIQWDATSATLKALGCHNIDRVLLA</sequence>
<organism>
    <name type="scientific">Escherichia coli O81 (strain ED1a)</name>
    <dbReference type="NCBI Taxonomy" id="585397"/>
    <lineage>
        <taxon>Bacteria</taxon>
        <taxon>Pseudomonadati</taxon>
        <taxon>Pseudomonadota</taxon>
        <taxon>Gammaproteobacteria</taxon>
        <taxon>Enterobacterales</taxon>
        <taxon>Enterobacteriaceae</taxon>
        <taxon>Escherichia</taxon>
    </lineage>
</organism>
<accession>B7MXF5</accession>
<feature type="chain" id="PRO_1000185416" description="Cytidine deaminase">
    <location>
        <begin position="1"/>
        <end position="294"/>
    </location>
</feature>
<feature type="domain" description="CMP/dCMP-type deaminase 1" evidence="2">
    <location>
        <begin position="48"/>
        <end position="168"/>
    </location>
</feature>
<feature type="domain" description="CMP/dCMP-type deaminase 2" evidence="2">
    <location>
        <begin position="186"/>
        <end position="294"/>
    </location>
</feature>
<feature type="active site" description="Proton donor" evidence="1">
    <location>
        <position position="104"/>
    </location>
</feature>
<feature type="binding site" evidence="1">
    <location>
        <begin position="89"/>
        <end position="91"/>
    </location>
    <ligand>
        <name>substrate</name>
    </ligand>
</feature>
<feature type="binding site" evidence="1">
    <location>
        <position position="102"/>
    </location>
    <ligand>
        <name>Zn(2+)</name>
        <dbReference type="ChEBI" id="CHEBI:29105"/>
        <note>catalytic</note>
    </ligand>
</feature>
<feature type="binding site" evidence="1">
    <location>
        <position position="129"/>
    </location>
    <ligand>
        <name>Zn(2+)</name>
        <dbReference type="ChEBI" id="CHEBI:29105"/>
        <note>catalytic</note>
    </ligand>
</feature>
<feature type="binding site" evidence="1">
    <location>
        <position position="132"/>
    </location>
    <ligand>
        <name>Zn(2+)</name>
        <dbReference type="ChEBI" id="CHEBI:29105"/>
        <note>catalytic</note>
    </ligand>
</feature>
<evidence type="ECO:0000255" key="1">
    <source>
        <dbReference type="HAMAP-Rule" id="MF_01558"/>
    </source>
</evidence>
<evidence type="ECO:0000255" key="2">
    <source>
        <dbReference type="PROSITE-ProRule" id="PRU01083"/>
    </source>
</evidence>
<proteinExistence type="inferred from homology"/>
<comment type="function">
    <text evidence="1">This enzyme scavenges exogenous and endogenous cytidine and 2'-deoxycytidine for UMP synthesis.</text>
</comment>
<comment type="catalytic activity">
    <reaction evidence="1">
        <text>cytidine + H2O + H(+) = uridine + NH4(+)</text>
        <dbReference type="Rhea" id="RHEA:16069"/>
        <dbReference type="ChEBI" id="CHEBI:15377"/>
        <dbReference type="ChEBI" id="CHEBI:15378"/>
        <dbReference type="ChEBI" id="CHEBI:16704"/>
        <dbReference type="ChEBI" id="CHEBI:17562"/>
        <dbReference type="ChEBI" id="CHEBI:28938"/>
        <dbReference type="EC" id="3.5.4.5"/>
    </reaction>
</comment>
<comment type="catalytic activity">
    <reaction evidence="1">
        <text>2'-deoxycytidine + H2O + H(+) = 2'-deoxyuridine + NH4(+)</text>
        <dbReference type="Rhea" id="RHEA:13433"/>
        <dbReference type="ChEBI" id="CHEBI:15377"/>
        <dbReference type="ChEBI" id="CHEBI:15378"/>
        <dbReference type="ChEBI" id="CHEBI:15698"/>
        <dbReference type="ChEBI" id="CHEBI:16450"/>
        <dbReference type="ChEBI" id="CHEBI:28938"/>
        <dbReference type="EC" id="3.5.4.5"/>
    </reaction>
</comment>
<comment type="cofactor">
    <cofactor evidence="1">
        <name>Zn(2+)</name>
        <dbReference type="ChEBI" id="CHEBI:29105"/>
    </cofactor>
    <text evidence="1">Binds 1 zinc ion.</text>
</comment>
<comment type="subunit">
    <text evidence="1">Homodimer.</text>
</comment>
<comment type="similarity">
    <text evidence="1">Belongs to the cytidine and deoxycytidylate deaminase family.</text>
</comment>